<protein>
    <recommendedName>
        <fullName evidence="1">Ribosome-binding factor A</fullName>
    </recommendedName>
</protein>
<dbReference type="EMBL" id="CP000304">
    <property type="protein sequence ID" value="ABP80940.1"/>
    <property type="molecule type" value="Genomic_DNA"/>
</dbReference>
<dbReference type="RefSeq" id="WP_011914371.1">
    <property type="nucleotide sequence ID" value="NC_009434.1"/>
</dbReference>
<dbReference type="SMR" id="A4VPN9"/>
<dbReference type="KEGG" id="psa:PST_3309"/>
<dbReference type="eggNOG" id="COG0858">
    <property type="taxonomic scope" value="Bacteria"/>
</dbReference>
<dbReference type="HOGENOM" id="CLU_089475_5_0_6"/>
<dbReference type="Proteomes" id="UP000000233">
    <property type="component" value="Chromosome"/>
</dbReference>
<dbReference type="GO" id="GO:0005829">
    <property type="term" value="C:cytosol"/>
    <property type="evidence" value="ECO:0007669"/>
    <property type="project" value="TreeGrafter"/>
</dbReference>
<dbReference type="GO" id="GO:0043024">
    <property type="term" value="F:ribosomal small subunit binding"/>
    <property type="evidence" value="ECO:0007669"/>
    <property type="project" value="TreeGrafter"/>
</dbReference>
<dbReference type="GO" id="GO:0030490">
    <property type="term" value="P:maturation of SSU-rRNA"/>
    <property type="evidence" value="ECO:0007669"/>
    <property type="project" value="UniProtKB-UniRule"/>
</dbReference>
<dbReference type="Gene3D" id="3.30.300.20">
    <property type="match status" value="1"/>
</dbReference>
<dbReference type="HAMAP" id="MF_00003">
    <property type="entry name" value="RbfA"/>
    <property type="match status" value="1"/>
</dbReference>
<dbReference type="InterPro" id="IPR015946">
    <property type="entry name" value="KH_dom-like_a/b"/>
</dbReference>
<dbReference type="InterPro" id="IPR000238">
    <property type="entry name" value="RbfA"/>
</dbReference>
<dbReference type="InterPro" id="IPR023799">
    <property type="entry name" value="RbfA_dom_sf"/>
</dbReference>
<dbReference type="InterPro" id="IPR020053">
    <property type="entry name" value="Ribosome-bd_factorA_CS"/>
</dbReference>
<dbReference type="NCBIfam" id="TIGR00082">
    <property type="entry name" value="rbfA"/>
    <property type="match status" value="1"/>
</dbReference>
<dbReference type="PANTHER" id="PTHR33515">
    <property type="entry name" value="RIBOSOME-BINDING FACTOR A, CHLOROPLASTIC-RELATED"/>
    <property type="match status" value="1"/>
</dbReference>
<dbReference type="PANTHER" id="PTHR33515:SF1">
    <property type="entry name" value="RIBOSOME-BINDING FACTOR A, CHLOROPLASTIC-RELATED"/>
    <property type="match status" value="1"/>
</dbReference>
<dbReference type="Pfam" id="PF02033">
    <property type="entry name" value="RBFA"/>
    <property type="match status" value="1"/>
</dbReference>
<dbReference type="SUPFAM" id="SSF89919">
    <property type="entry name" value="Ribosome-binding factor A, RbfA"/>
    <property type="match status" value="1"/>
</dbReference>
<dbReference type="PROSITE" id="PS01319">
    <property type="entry name" value="RBFA"/>
    <property type="match status" value="1"/>
</dbReference>
<sequence length="129" mass="14718">MAKEFSRTQRIGDQMQRELALLIQREIKDPRLGLITITAVDVSRDLSHAKIFITIMGQDDDQEAIKGNLRILNDAAGFLRMQLGKSMKLRTVPQLHFNYDASIRRGVELSSLIERAVAEDRKHSDERGE</sequence>
<feature type="chain" id="PRO_1000000181" description="Ribosome-binding factor A">
    <location>
        <begin position="1"/>
        <end position="129"/>
    </location>
</feature>
<gene>
    <name evidence="1" type="primary">rbfA</name>
    <name type="ordered locus">PST_3309</name>
</gene>
<organism>
    <name type="scientific">Stutzerimonas stutzeri (strain A1501)</name>
    <name type="common">Pseudomonas stutzeri</name>
    <dbReference type="NCBI Taxonomy" id="379731"/>
    <lineage>
        <taxon>Bacteria</taxon>
        <taxon>Pseudomonadati</taxon>
        <taxon>Pseudomonadota</taxon>
        <taxon>Gammaproteobacteria</taxon>
        <taxon>Pseudomonadales</taxon>
        <taxon>Pseudomonadaceae</taxon>
        <taxon>Stutzerimonas</taxon>
    </lineage>
</organism>
<reference key="1">
    <citation type="journal article" date="2008" name="Proc. Natl. Acad. Sci. U.S.A.">
        <title>Nitrogen fixation island and rhizosphere competence traits in the genome of root-associated Pseudomonas stutzeri A1501.</title>
        <authorList>
            <person name="Yan Y."/>
            <person name="Yang J."/>
            <person name="Dou Y."/>
            <person name="Chen M."/>
            <person name="Ping S."/>
            <person name="Peng J."/>
            <person name="Lu W."/>
            <person name="Zhang W."/>
            <person name="Yao Z."/>
            <person name="Li H."/>
            <person name="Liu W."/>
            <person name="He S."/>
            <person name="Geng L."/>
            <person name="Zhang X."/>
            <person name="Yang F."/>
            <person name="Yu H."/>
            <person name="Zhan Y."/>
            <person name="Li D."/>
            <person name="Lin Z."/>
            <person name="Wang Y."/>
            <person name="Elmerich C."/>
            <person name="Lin M."/>
            <person name="Jin Q."/>
        </authorList>
    </citation>
    <scope>NUCLEOTIDE SEQUENCE [LARGE SCALE GENOMIC DNA]</scope>
    <source>
        <strain>A1501</strain>
    </source>
</reference>
<accession>A4VPN9</accession>
<comment type="function">
    <text evidence="1">One of several proteins that assist in the late maturation steps of the functional core of the 30S ribosomal subunit. Associates with free 30S ribosomal subunits (but not with 30S subunits that are part of 70S ribosomes or polysomes). Required for efficient processing of 16S rRNA. May interact with the 5'-terminal helix region of 16S rRNA.</text>
</comment>
<comment type="subunit">
    <text evidence="1">Monomer. Binds 30S ribosomal subunits, but not 50S ribosomal subunits or 70S ribosomes.</text>
</comment>
<comment type="subcellular location">
    <subcellularLocation>
        <location evidence="1">Cytoplasm</location>
    </subcellularLocation>
</comment>
<comment type="similarity">
    <text evidence="1">Belongs to the RbfA family.</text>
</comment>
<proteinExistence type="inferred from homology"/>
<name>RBFA_STUS1</name>
<evidence type="ECO:0000255" key="1">
    <source>
        <dbReference type="HAMAP-Rule" id="MF_00003"/>
    </source>
</evidence>
<keyword id="KW-0963">Cytoplasm</keyword>
<keyword id="KW-1185">Reference proteome</keyword>
<keyword id="KW-0690">Ribosome biogenesis</keyword>